<evidence type="ECO:0000305" key="1"/>
<protein>
    <recommendedName>
        <fullName evidence="1">Small ribosomal subunit protein uS19</fullName>
    </recommendedName>
    <alternativeName>
        <fullName>40S ribosomal protein S15</fullName>
    </alternativeName>
</protein>
<comment type="similarity">
    <text evidence="1">Belongs to the universal ribosomal protein uS19 family.</text>
</comment>
<reference key="1">
    <citation type="submission" date="1996-05" db="EMBL/GenBank/DDBJ databases">
        <authorList>
            <person name="Poteryaev D.A."/>
        </authorList>
    </citation>
    <scope>NUCLEOTIDE SEQUENCE [MRNA]</scope>
    <source>
        <tissue>Nerve</tissue>
    </source>
</reference>
<dbReference type="EMBL" id="U55865">
    <property type="protein sequence ID" value="AAB01193.1"/>
    <property type="molecule type" value="mRNA"/>
</dbReference>
<dbReference type="SMR" id="P52820"/>
<dbReference type="GO" id="GO:1990904">
    <property type="term" value="C:ribonucleoprotein complex"/>
    <property type="evidence" value="ECO:0007669"/>
    <property type="project" value="UniProtKB-KW"/>
</dbReference>
<dbReference type="GO" id="GO:0005840">
    <property type="term" value="C:ribosome"/>
    <property type="evidence" value="ECO:0007669"/>
    <property type="project" value="UniProtKB-KW"/>
</dbReference>
<dbReference type="GO" id="GO:0003735">
    <property type="term" value="F:structural constituent of ribosome"/>
    <property type="evidence" value="ECO:0007669"/>
    <property type="project" value="InterPro"/>
</dbReference>
<dbReference type="GO" id="GO:0006412">
    <property type="term" value="P:translation"/>
    <property type="evidence" value="ECO:0007669"/>
    <property type="project" value="InterPro"/>
</dbReference>
<dbReference type="Gene3D" id="3.30.860.10">
    <property type="entry name" value="30s Ribosomal Protein S19, Chain A"/>
    <property type="match status" value="1"/>
</dbReference>
<dbReference type="InterPro" id="IPR023575">
    <property type="entry name" value="Ribosomal_uS19_SF"/>
</dbReference>
<keyword id="KW-0687">Ribonucleoprotein</keyword>
<keyword id="KW-0689">Ribosomal protein</keyword>
<sequence>MAETAEDLAEKKKKRTFRKFTYRGVDLDQLLDMNMDQ</sequence>
<gene>
    <name type="primary">RPS15</name>
</gene>
<feature type="chain" id="PRO_0000130036" description="Small ribosomal subunit protein uS19">
    <location>
        <begin position="1"/>
        <end position="37" status="greater than"/>
    </location>
</feature>
<feature type="non-terminal residue">
    <location>
        <position position="37"/>
    </location>
</feature>
<name>RS15_HELLU</name>
<proteinExistence type="evidence at transcript level"/>
<organism>
    <name type="scientific">Helix lucorum</name>
    <name type="common">Snail</name>
    <dbReference type="NCBI Taxonomy" id="31229"/>
    <lineage>
        <taxon>Eukaryota</taxon>
        <taxon>Metazoa</taxon>
        <taxon>Spiralia</taxon>
        <taxon>Lophotrochozoa</taxon>
        <taxon>Mollusca</taxon>
        <taxon>Gastropoda</taxon>
        <taxon>Heterobranchia</taxon>
        <taxon>Euthyneura</taxon>
        <taxon>Panpulmonata</taxon>
        <taxon>Eupulmonata</taxon>
        <taxon>Stylommatophora</taxon>
        <taxon>Helicina</taxon>
        <taxon>Helicoidea</taxon>
        <taxon>Helicidae</taxon>
        <taxon>Helix</taxon>
    </lineage>
</organism>
<accession>P52820</accession>